<reference key="1">
    <citation type="submission" date="2004-11" db="EMBL/GenBank/DDBJ databases">
        <authorList>
            <consortium name="The German cDNA consortium"/>
        </authorList>
    </citation>
    <scope>NUCLEOTIDE SEQUENCE [LARGE SCALE MRNA]</scope>
    <source>
        <tissue>Brain cortex</tissue>
    </source>
</reference>
<protein>
    <recommendedName>
        <fullName>Myotubularin-related protein 12</fullName>
    </recommendedName>
    <alternativeName>
        <fullName evidence="7">Inactive phosphatidylinositol 3-phosphatase 12</fullName>
    </alternativeName>
</protein>
<sequence>MLGKGVVGGGGGTKGPKPSFVSYVRPEEIHTNEKEVTEKEVTLHLLPGEQLLCEASTVLKYVQEDSCQHGVYGRLVCTDFKIAFLGDDESALDNDETQFKNKVIGENDITLHCVDQIYGVFDEKKKTLFGQLKKYPGKLIIHCKDFRVFQFCLGYTKEEEVKRIVSGIIHHTQAPKLLKRLFLFSYATAAQNNTVTDPKNHTVMFDTLKDWCWELERTKGNMKYKAVSVNEGYKVCERLPAYFVVPTPLPEENVQRFQGHGIPIWCWSCHNGSALLKMSALPKEQDDGILQIQKSFLDGIYKTIHRSPYEIVKTEDVSSNFLSLQEIQTAYSKFKQLFLTDNSTEFWDTDIKWFSLLESSSWLDIIRRCLKKAIEITECMEAQNMNVLLLEENASDLCCLISSLVQLMMDPHCRTRIGFQSLIQKEWVMGGHCFLDRCNHLRQNDKEEVPVFLLFLDCVWQLVHQHPPAFEFTETYLTVLSDSLYIPIFSTFFFNSPHQKDANMGREGQDAQSKPLNLLTVWDWSVQFEPKAQTLLKNPLYVEKPKLDKGQRKGMRFKHQRQLSLPLTQSKSSPKRGFFREETDHLIKNLLGKRISKLINSSDELQDNFREFYDSWHSKSTDYHGLLLPHIEGPEIKVWAQRYLRWIPEAQILGGGQVATMSKLLEMMEEVQSLQEKIDERHHSQQVPQAEAPCLLRNSARLSSLFPFALLQRHSSKPVLPTSGWKALGDEDDLAKREDEFVDLGDV</sequence>
<feature type="chain" id="PRO_0000315828" description="Myotubularin-related protein 12">
    <location>
        <begin position="1"/>
        <end position="747"/>
    </location>
</feature>
<feature type="domain" description="Myotubularin phosphatase" evidence="5">
    <location>
        <begin position="205"/>
        <end position="643"/>
    </location>
</feature>
<feature type="region of interest" description="Disordered" evidence="6">
    <location>
        <begin position="1"/>
        <end position="21"/>
    </location>
</feature>
<feature type="region of interest" description="Interaction with MTM1" evidence="1">
    <location>
        <begin position="449"/>
        <end position="558"/>
    </location>
</feature>
<feature type="compositionally biased region" description="Gly residues" evidence="6">
    <location>
        <begin position="1"/>
        <end position="14"/>
    </location>
</feature>
<feature type="modified residue" description="Phosphoserine" evidence="4">
    <location>
        <position position="564"/>
    </location>
</feature>
<feature type="modified residue" description="Phosphoserine" evidence="2">
    <location>
        <position position="601"/>
    </location>
</feature>
<feature type="modified residue" description="Phosphoserine" evidence="4">
    <location>
        <position position="716"/>
    </location>
</feature>
<keyword id="KW-0963">Cytoplasm</keyword>
<keyword id="KW-0597">Phosphoprotein</keyword>
<keyword id="KW-1185">Reference proteome</keyword>
<keyword id="KW-0703">Sarcoplasmic reticulum</keyword>
<accession>Q5R989</accession>
<gene>
    <name type="primary">MTMR12</name>
</gene>
<organism>
    <name type="scientific">Pongo abelii</name>
    <name type="common">Sumatran orangutan</name>
    <name type="synonym">Pongo pygmaeus abelii</name>
    <dbReference type="NCBI Taxonomy" id="9601"/>
    <lineage>
        <taxon>Eukaryota</taxon>
        <taxon>Metazoa</taxon>
        <taxon>Chordata</taxon>
        <taxon>Craniata</taxon>
        <taxon>Vertebrata</taxon>
        <taxon>Euteleostomi</taxon>
        <taxon>Mammalia</taxon>
        <taxon>Eutheria</taxon>
        <taxon>Euarchontoglires</taxon>
        <taxon>Primates</taxon>
        <taxon>Haplorrhini</taxon>
        <taxon>Catarrhini</taxon>
        <taxon>Hominidae</taxon>
        <taxon>Pongo</taxon>
    </lineage>
</organism>
<name>MTMRC_PONAB</name>
<comment type="function">
    <text evidence="3">Acts as an adapter for the myotubularin-related phosphatases. Regulates phosphatase MTM1 protein stability and possibly its intracellular location. By stabilizing MTM1 protein levels, required for skeletal muscle maintenance but not for myogenesis.</text>
</comment>
<comment type="subunit">
    <text evidence="3 4">Heterodimer with lipid phosphatase MTM1 (By similarity). Heterodimer with lipid phosphatase MTMR2 (By similarity).</text>
</comment>
<comment type="subcellular location">
    <subcellularLocation>
        <location evidence="4">Cytoplasm</location>
    </subcellularLocation>
    <subcellularLocation>
        <location evidence="3">Sarcoplasmic reticulum</location>
    </subcellularLocation>
    <subcellularLocation>
        <location evidence="3">Cytoplasm</location>
        <location evidence="3">Myofibril</location>
        <location evidence="3">Sarcomere</location>
    </subcellularLocation>
    <text evidence="3 4">Localizes to punctate vesicles when associated with MTM1 (By similarity). Localizes to triads, a structure formed by a T tubule and two sarcoplasmic reticulum terminal cisterna. In skeletal muscles, co-localizes with MTM1 in the sarcomere. Partially localizes to the sarcoplasmic reticulum in skeletal muscles (By similarity).</text>
</comment>
<comment type="similarity">
    <text evidence="7">Belongs to the protein-tyrosine phosphatase family. Non-receptor class myotubularin subfamily.</text>
</comment>
<comment type="caution">
    <text evidence="4">Although it belongs to the non-receptor class myotubularin subfamily, lacks the conserved active site cysteine residue at position 391 in the dsPTPase catalytic loop and does not have phosphatase activity.</text>
</comment>
<evidence type="ECO:0000250" key="1"/>
<evidence type="ECO:0000250" key="2">
    <source>
        <dbReference type="UniProtKB" id="Q5FVM6"/>
    </source>
</evidence>
<evidence type="ECO:0000250" key="3">
    <source>
        <dbReference type="UniProtKB" id="Q80TA6"/>
    </source>
</evidence>
<evidence type="ECO:0000250" key="4">
    <source>
        <dbReference type="UniProtKB" id="Q9C0I1"/>
    </source>
</evidence>
<evidence type="ECO:0000255" key="5">
    <source>
        <dbReference type="PROSITE-ProRule" id="PRU00669"/>
    </source>
</evidence>
<evidence type="ECO:0000256" key="6">
    <source>
        <dbReference type="SAM" id="MobiDB-lite"/>
    </source>
</evidence>
<evidence type="ECO:0000305" key="7"/>
<proteinExistence type="evidence at transcript level"/>
<dbReference type="EMBL" id="CR859502">
    <property type="protein sequence ID" value="CAH91671.1"/>
    <property type="molecule type" value="mRNA"/>
</dbReference>
<dbReference type="RefSeq" id="NP_001128988.1">
    <property type="nucleotide sequence ID" value="NM_001135516.1"/>
</dbReference>
<dbReference type="SMR" id="Q5R989"/>
<dbReference type="FunCoup" id="Q5R989">
    <property type="interactions" value="2377"/>
</dbReference>
<dbReference type="STRING" id="9601.ENSPPYP00000017173"/>
<dbReference type="GeneID" id="100190828"/>
<dbReference type="KEGG" id="pon:100190828"/>
<dbReference type="CTD" id="54545"/>
<dbReference type="eggNOG" id="KOG1089">
    <property type="taxonomic scope" value="Eukaryota"/>
</dbReference>
<dbReference type="InParanoid" id="Q5R989"/>
<dbReference type="OrthoDB" id="271628at2759"/>
<dbReference type="Proteomes" id="UP000001595">
    <property type="component" value="Unplaced"/>
</dbReference>
<dbReference type="GO" id="GO:0016020">
    <property type="term" value="C:membrane"/>
    <property type="evidence" value="ECO:0007669"/>
    <property type="project" value="TreeGrafter"/>
</dbReference>
<dbReference type="GO" id="GO:0030017">
    <property type="term" value="C:sarcomere"/>
    <property type="evidence" value="ECO:0007669"/>
    <property type="project" value="UniProtKB-SubCell"/>
</dbReference>
<dbReference type="GO" id="GO:0016529">
    <property type="term" value="C:sarcoplasmic reticulum"/>
    <property type="evidence" value="ECO:0007669"/>
    <property type="project" value="UniProtKB-SubCell"/>
</dbReference>
<dbReference type="GO" id="GO:0046856">
    <property type="term" value="P:phosphatidylinositol dephosphorylation"/>
    <property type="evidence" value="ECO:0007669"/>
    <property type="project" value="TreeGrafter"/>
</dbReference>
<dbReference type="CDD" id="cd14594">
    <property type="entry name" value="PTP-MTMR12"/>
    <property type="match status" value="1"/>
</dbReference>
<dbReference type="FunFam" id="2.30.29.30:FF:000188">
    <property type="entry name" value="Myotubularin related protein 12"/>
    <property type="match status" value="1"/>
</dbReference>
<dbReference type="Gene3D" id="2.30.29.30">
    <property type="entry name" value="Pleckstrin-homology domain (PH domain)/Phosphotyrosine-binding domain (PTB)"/>
    <property type="match status" value="1"/>
</dbReference>
<dbReference type="InterPro" id="IPR022587">
    <property type="entry name" value="MTMR12-like_C"/>
</dbReference>
<dbReference type="InterPro" id="IPR030576">
    <property type="entry name" value="MTMR12_PTP"/>
</dbReference>
<dbReference type="InterPro" id="IPR030564">
    <property type="entry name" value="Myotubularin"/>
</dbReference>
<dbReference type="InterPro" id="IPR010569">
    <property type="entry name" value="Myotubularin-like_Pase_dom"/>
</dbReference>
<dbReference type="InterPro" id="IPR011993">
    <property type="entry name" value="PH-like_dom_sf"/>
</dbReference>
<dbReference type="InterPro" id="IPR029021">
    <property type="entry name" value="Prot-tyrosine_phosphatase-like"/>
</dbReference>
<dbReference type="PANTHER" id="PTHR10807">
    <property type="entry name" value="MYOTUBULARIN-RELATED"/>
    <property type="match status" value="1"/>
</dbReference>
<dbReference type="PANTHER" id="PTHR10807:SF37">
    <property type="entry name" value="MYOTUBULARIN-RELATED PROTEIN 12"/>
    <property type="match status" value="1"/>
</dbReference>
<dbReference type="Pfam" id="PF12578">
    <property type="entry name" value="3-PAP"/>
    <property type="match status" value="1"/>
</dbReference>
<dbReference type="Pfam" id="PF06602">
    <property type="entry name" value="Myotub-related"/>
    <property type="match status" value="1"/>
</dbReference>
<dbReference type="SUPFAM" id="SSF52799">
    <property type="entry name" value="(Phosphotyrosine protein) phosphatases II"/>
    <property type="match status" value="1"/>
</dbReference>
<dbReference type="SUPFAM" id="SSF50729">
    <property type="entry name" value="PH domain-like"/>
    <property type="match status" value="1"/>
</dbReference>
<dbReference type="PROSITE" id="PS51339">
    <property type="entry name" value="PPASE_MYOTUBULARIN"/>
    <property type="match status" value="1"/>
</dbReference>